<sequence length="421" mass="46428">MSAHSMLCERIAIAKELIKRAESLSRSRKGGIEGGAKLCSKLKAELKFLQKVEAGKVAIKESHLQSTNLTHLRAIVESAENLEEVVSVLHVFGYTDTFGEKQTLVVDVVANGGHTWVKAIGRKAEALHNIWLGRGQYGDKSIIEQAEDFLQASHQQPVQYSNPHIIFAFYNSVSSPMAEKLKEMGISVRGDIVAVNSLLDHPEELQPSESESDDEGPELLQVTRVDRENILASVAFPTEIKVDVCKRVNLDITTLITYVSALSYGGCHFIFKEKVLTEQAEQERKEQVLPQLEAFMKDKELFACESAVKDFQSILDTLGGPGERERAAMLIKRINVVPDQPSERALKLVASSKINSRSLTIFGTGDNLKAITMTANSGFVRAANNQGVKFSVFIHQPRALTESKEALATPLPKDCTTDSEH</sequence>
<feature type="chain" id="PRO_0000279528" description="UPF0415 protein C7orf25 homolog">
    <location>
        <begin position="1"/>
        <end position="421"/>
    </location>
</feature>
<organism>
    <name type="scientific">Bos taurus</name>
    <name type="common">Bovine</name>
    <dbReference type="NCBI Taxonomy" id="9913"/>
    <lineage>
        <taxon>Eukaryota</taxon>
        <taxon>Metazoa</taxon>
        <taxon>Chordata</taxon>
        <taxon>Craniata</taxon>
        <taxon>Vertebrata</taxon>
        <taxon>Euteleostomi</taxon>
        <taxon>Mammalia</taxon>
        <taxon>Eutheria</taxon>
        <taxon>Laurasiatheria</taxon>
        <taxon>Artiodactyla</taxon>
        <taxon>Ruminantia</taxon>
        <taxon>Pecora</taxon>
        <taxon>Bovidae</taxon>
        <taxon>Bovinae</taxon>
        <taxon>Bos</taxon>
    </lineage>
</organism>
<keyword id="KW-1185">Reference proteome</keyword>
<reference key="1">
    <citation type="submission" date="2006-05" db="EMBL/GenBank/DDBJ databases">
        <authorList>
            <consortium name="NIH - Mammalian Gene Collection (MGC) project"/>
        </authorList>
    </citation>
    <scope>NUCLEOTIDE SEQUENCE [LARGE SCALE MRNA]</scope>
    <source>
        <strain>Hereford</strain>
        <tissue>Hippocampus</tissue>
    </source>
</reference>
<protein>
    <recommendedName>
        <fullName>UPF0415 protein C7orf25 homolog</fullName>
    </recommendedName>
</protein>
<evidence type="ECO:0000305" key="1"/>
<dbReference type="EMBL" id="BC116043">
    <property type="protein sequence ID" value="AAI16044.1"/>
    <property type="molecule type" value="mRNA"/>
</dbReference>
<dbReference type="RefSeq" id="NP_001069608.1">
    <property type="nucleotide sequence ID" value="NM_001076140.1"/>
</dbReference>
<dbReference type="RefSeq" id="XP_005205703.1">
    <property type="nucleotide sequence ID" value="XM_005205646.5"/>
</dbReference>
<dbReference type="RefSeq" id="XP_005205704.1">
    <property type="nucleotide sequence ID" value="XM_005205647.3"/>
</dbReference>
<dbReference type="RefSeq" id="XP_005205705.1">
    <property type="nucleotide sequence ID" value="XM_005205648.5"/>
</dbReference>
<dbReference type="RefSeq" id="XP_010802724.1">
    <property type="nucleotide sequence ID" value="XM_010804422.4"/>
</dbReference>
<dbReference type="SMR" id="Q1LZE8"/>
<dbReference type="FunCoup" id="Q1LZE8">
    <property type="interactions" value="1407"/>
</dbReference>
<dbReference type="STRING" id="9913.ENSBTAP00000066463"/>
<dbReference type="PaxDb" id="9913-ENSBTAP00000012469"/>
<dbReference type="Ensembl" id="ENSBTAT00000097135.1">
    <property type="protein sequence ID" value="ENSBTAP00000081516.1"/>
    <property type="gene ID" value="ENSBTAG00000009472.5"/>
</dbReference>
<dbReference type="GeneID" id="538970"/>
<dbReference type="KEGG" id="bta:538970"/>
<dbReference type="CTD" id="538970"/>
<dbReference type="VEuPathDB" id="HostDB:ENSBTAG00000009472"/>
<dbReference type="VGNC" id="VGNC:52719">
    <property type="gene designation" value="C4H7orf25"/>
</dbReference>
<dbReference type="eggNOG" id="KOG4529">
    <property type="taxonomic scope" value="Eukaryota"/>
</dbReference>
<dbReference type="GeneTree" id="ENSGT00390000014722"/>
<dbReference type="HOGENOM" id="CLU_054053_0_0_1"/>
<dbReference type="InParanoid" id="Q1LZE8"/>
<dbReference type="OrthoDB" id="441890at2759"/>
<dbReference type="TreeFam" id="TF105980"/>
<dbReference type="Proteomes" id="UP000009136">
    <property type="component" value="Chromosome 4"/>
</dbReference>
<dbReference type="Bgee" id="ENSBTAG00000009472">
    <property type="expression patterns" value="Expressed in oocyte and 109 other cell types or tissues"/>
</dbReference>
<dbReference type="InterPro" id="IPR010733">
    <property type="entry name" value="DUF1308"/>
</dbReference>
<dbReference type="InterPro" id="IPR041076">
    <property type="entry name" value="DUF5614"/>
</dbReference>
<dbReference type="PANTHER" id="PTHR13379">
    <property type="entry name" value="UNCHARACTERIZED DUF1308"/>
    <property type="match status" value="1"/>
</dbReference>
<dbReference type="PANTHER" id="PTHR13379:SF0">
    <property type="entry name" value="UPF0415 PROTEIN C7ORF25"/>
    <property type="match status" value="1"/>
</dbReference>
<dbReference type="Pfam" id="PF07000">
    <property type="entry name" value="DUF1308"/>
    <property type="match status" value="1"/>
</dbReference>
<dbReference type="Pfam" id="PF18474">
    <property type="entry name" value="DUF5614"/>
    <property type="match status" value="1"/>
</dbReference>
<name>CG025_BOVIN</name>
<accession>Q1LZE8</accession>
<proteinExistence type="evidence at transcript level"/>
<comment type="similarity">
    <text evidence="1">Belongs to the UPF0415 family.</text>
</comment>